<dbReference type="EC" id="2.7.7.18" evidence="1"/>
<dbReference type="EMBL" id="CP000726">
    <property type="protein sequence ID" value="ABS35210.1"/>
    <property type="molecule type" value="Genomic_DNA"/>
</dbReference>
<dbReference type="RefSeq" id="WP_003360011.1">
    <property type="nucleotide sequence ID" value="NC_009697.1"/>
</dbReference>
<dbReference type="SMR" id="A7FXU4"/>
<dbReference type="GeneID" id="5187236"/>
<dbReference type="KEGG" id="cba:CLB_3009"/>
<dbReference type="HOGENOM" id="CLU_069765_3_2_9"/>
<dbReference type="UniPathway" id="UPA00253">
    <property type="reaction ID" value="UER00332"/>
</dbReference>
<dbReference type="GO" id="GO:0005524">
    <property type="term" value="F:ATP binding"/>
    <property type="evidence" value="ECO:0007669"/>
    <property type="project" value="UniProtKB-KW"/>
</dbReference>
<dbReference type="GO" id="GO:0004515">
    <property type="term" value="F:nicotinate-nucleotide adenylyltransferase activity"/>
    <property type="evidence" value="ECO:0007669"/>
    <property type="project" value="UniProtKB-UniRule"/>
</dbReference>
<dbReference type="GO" id="GO:0009435">
    <property type="term" value="P:NAD biosynthetic process"/>
    <property type="evidence" value="ECO:0007669"/>
    <property type="project" value="UniProtKB-UniRule"/>
</dbReference>
<dbReference type="CDD" id="cd02165">
    <property type="entry name" value="NMNAT"/>
    <property type="match status" value="1"/>
</dbReference>
<dbReference type="FunFam" id="3.40.50.620:FF:000255">
    <property type="entry name" value="Probable nicotinate-nucleotide adenylyltransferase"/>
    <property type="match status" value="1"/>
</dbReference>
<dbReference type="Gene3D" id="3.40.50.620">
    <property type="entry name" value="HUPs"/>
    <property type="match status" value="1"/>
</dbReference>
<dbReference type="HAMAP" id="MF_00244">
    <property type="entry name" value="NaMN_adenylyltr"/>
    <property type="match status" value="1"/>
</dbReference>
<dbReference type="InterPro" id="IPR004821">
    <property type="entry name" value="Cyt_trans-like"/>
</dbReference>
<dbReference type="InterPro" id="IPR005248">
    <property type="entry name" value="NadD/NMNAT"/>
</dbReference>
<dbReference type="InterPro" id="IPR014729">
    <property type="entry name" value="Rossmann-like_a/b/a_fold"/>
</dbReference>
<dbReference type="NCBIfam" id="TIGR00125">
    <property type="entry name" value="cyt_tran_rel"/>
    <property type="match status" value="1"/>
</dbReference>
<dbReference type="NCBIfam" id="TIGR00482">
    <property type="entry name" value="nicotinate (nicotinamide) nucleotide adenylyltransferase"/>
    <property type="match status" value="1"/>
</dbReference>
<dbReference type="NCBIfam" id="NF000840">
    <property type="entry name" value="PRK00071.1-3"/>
    <property type="match status" value="1"/>
</dbReference>
<dbReference type="PANTHER" id="PTHR39321">
    <property type="entry name" value="NICOTINATE-NUCLEOTIDE ADENYLYLTRANSFERASE-RELATED"/>
    <property type="match status" value="1"/>
</dbReference>
<dbReference type="PANTHER" id="PTHR39321:SF3">
    <property type="entry name" value="PHOSPHOPANTETHEINE ADENYLYLTRANSFERASE"/>
    <property type="match status" value="1"/>
</dbReference>
<dbReference type="Pfam" id="PF01467">
    <property type="entry name" value="CTP_transf_like"/>
    <property type="match status" value="1"/>
</dbReference>
<dbReference type="SUPFAM" id="SSF52374">
    <property type="entry name" value="Nucleotidylyl transferase"/>
    <property type="match status" value="1"/>
</dbReference>
<sequence length="201" mass="23946">MINKAILGGTFDPIHNAHINVAYEALERFNLEEVIFIPAGNPPHKIKLKKTPAHIRYEMVKLAIEKETRFSISDFEIKSKGLSYTYRTLKHFKEKEPETNWYFITGEDCLSYLEHWKYIDEIFNICNFVIFSREGFKEKEEIIKKKKSILLKYRKEILFMDASILDISSTKIRNRIKEGKEVSFYMPDKVYKFILQNNLYK</sequence>
<accession>A7FXU4</accession>
<gene>
    <name evidence="1" type="primary">nadD</name>
    <name type="ordered locus">CLB_3009</name>
</gene>
<evidence type="ECO:0000255" key="1">
    <source>
        <dbReference type="HAMAP-Rule" id="MF_00244"/>
    </source>
</evidence>
<protein>
    <recommendedName>
        <fullName evidence="1">Probable nicotinate-nucleotide adenylyltransferase</fullName>
        <ecNumber evidence="1">2.7.7.18</ecNumber>
    </recommendedName>
    <alternativeName>
        <fullName evidence="1">Deamido-NAD(+) diphosphorylase</fullName>
    </alternativeName>
    <alternativeName>
        <fullName evidence="1">Deamido-NAD(+) pyrophosphorylase</fullName>
    </alternativeName>
    <alternativeName>
        <fullName evidence="1">Nicotinate mononucleotide adenylyltransferase</fullName>
        <shortName evidence="1">NaMN adenylyltransferase</shortName>
    </alternativeName>
</protein>
<organism>
    <name type="scientific">Clostridium botulinum (strain ATCC 19397 / Type A)</name>
    <dbReference type="NCBI Taxonomy" id="441770"/>
    <lineage>
        <taxon>Bacteria</taxon>
        <taxon>Bacillati</taxon>
        <taxon>Bacillota</taxon>
        <taxon>Clostridia</taxon>
        <taxon>Eubacteriales</taxon>
        <taxon>Clostridiaceae</taxon>
        <taxon>Clostridium</taxon>
    </lineage>
</organism>
<name>NADD_CLOB1</name>
<feature type="chain" id="PRO_0000310106" description="Probable nicotinate-nucleotide adenylyltransferase">
    <location>
        <begin position="1"/>
        <end position="201"/>
    </location>
</feature>
<proteinExistence type="inferred from homology"/>
<reference key="1">
    <citation type="journal article" date="2007" name="PLoS ONE">
        <title>Analysis of the neurotoxin complex genes in Clostridium botulinum A1-A4 and B1 strains: BoNT/A3, /Ba4 and /B1 clusters are located within plasmids.</title>
        <authorList>
            <person name="Smith T.J."/>
            <person name="Hill K.K."/>
            <person name="Foley B.T."/>
            <person name="Detter J.C."/>
            <person name="Munk A.C."/>
            <person name="Bruce D.C."/>
            <person name="Doggett N.A."/>
            <person name="Smith L.A."/>
            <person name="Marks J.D."/>
            <person name="Xie G."/>
            <person name="Brettin T.S."/>
        </authorList>
    </citation>
    <scope>NUCLEOTIDE SEQUENCE [LARGE SCALE GENOMIC DNA]</scope>
    <source>
        <strain>ATCC 19397 / Type A</strain>
    </source>
</reference>
<keyword id="KW-0067">ATP-binding</keyword>
<keyword id="KW-0520">NAD</keyword>
<keyword id="KW-0547">Nucleotide-binding</keyword>
<keyword id="KW-0548">Nucleotidyltransferase</keyword>
<keyword id="KW-0662">Pyridine nucleotide biosynthesis</keyword>
<keyword id="KW-0808">Transferase</keyword>
<comment type="function">
    <text evidence="1">Catalyzes the reversible adenylation of nicotinate mononucleotide (NaMN) to nicotinic acid adenine dinucleotide (NaAD).</text>
</comment>
<comment type="catalytic activity">
    <reaction evidence="1">
        <text>nicotinate beta-D-ribonucleotide + ATP + H(+) = deamido-NAD(+) + diphosphate</text>
        <dbReference type="Rhea" id="RHEA:22860"/>
        <dbReference type="ChEBI" id="CHEBI:15378"/>
        <dbReference type="ChEBI" id="CHEBI:30616"/>
        <dbReference type="ChEBI" id="CHEBI:33019"/>
        <dbReference type="ChEBI" id="CHEBI:57502"/>
        <dbReference type="ChEBI" id="CHEBI:58437"/>
        <dbReference type="EC" id="2.7.7.18"/>
    </reaction>
</comment>
<comment type="pathway">
    <text evidence="1">Cofactor biosynthesis; NAD(+) biosynthesis; deamido-NAD(+) from nicotinate D-ribonucleotide: step 1/1.</text>
</comment>
<comment type="similarity">
    <text evidence="1">Belongs to the NadD family.</text>
</comment>